<comment type="function">
    <text evidence="1">Catalyzes the phosphorolysis of diverse nucleosides, yielding D-ribose 1-phosphate and the respective free bases. Can use uridine, adenosine, guanosine, cytidine, thymidine, inosine and xanthosine as substrates. Also catalyzes the reverse reactions.</text>
</comment>
<comment type="catalytic activity">
    <reaction evidence="1">
        <text>a purine D-ribonucleoside + phosphate = a purine nucleobase + alpha-D-ribose 1-phosphate</text>
        <dbReference type="Rhea" id="RHEA:19805"/>
        <dbReference type="ChEBI" id="CHEBI:26386"/>
        <dbReference type="ChEBI" id="CHEBI:43474"/>
        <dbReference type="ChEBI" id="CHEBI:57720"/>
        <dbReference type="ChEBI" id="CHEBI:142355"/>
        <dbReference type="EC" id="2.4.2.1"/>
    </reaction>
</comment>
<comment type="catalytic activity">
    <reaction evidence="1">
        <text>adenosine + phosphate = alpha-D-ribose 1-phosphate + adenine</text>
        <dbReference type="Rhea" id="RHEA:27642"/>
        <dbReference type="ChEBI" id="CHEBI:16335"/>
        <dbReference type="ChEBI" id="CHEBI:16708"/>
        <dbReference type="ChEBI" id="CHEBI:43474"/>
        <dbReference type="ChEBI" id="CHEBI:57720"/>
        <dbReference type="EC" id="2.4.2.1"/>
    </reaction>
</comment>
<comment type="catalytic activity">
    <reaction evidence="1">
        <text>cytidine + phosphate = cytosine + alpha-D-ribose 1-phosphate</text>
        <dbReference type="Rhea" id="RHEA:52540"/>
        <dbReference type="ChEBI" id="CHEBI:16040"/>
        <dbReference type="ChEBI" id="CHEBI:17562"/>
        <dbReference type="ChEBI" id="CHEBI:43474"/>
        <dbReference type="ChEBI" id="CHEBI:57720"/>
        <dbReference type="EC" id="2.4.2.2"/>
    </reaction>
</comment>
<comment type="catalytic activity">
    <reaction evidence="1">
        <text>guanosine + phosphate = alpha-D-ribose 1-phosphate + guanine</text>
        <dbReference type="Rhea" id="RHEA:13233"/>
        <dbReference type="ChEBI" id="CHEBI:16235"/>
        <dbReference type="ChEBI" id="CHEBI:16750"/>
        <dbReference type="ChEBI" id="CHEBI:43474"/>
        <dbReference type="ChEBI" id="CHEBI:57720"/>
        <dbReference type="EC" id="2.4.2.1"/>
    </reaction>
</comment>
<comment type="catalytic activity">
    <reaction evidence="1">
        <text>inosine + phosphate = alpha-D-ribose 1-phosphate + hypoxanthine</text>
        <dbReference type="Rhea" id="RHEA:27646"/>
        <dbReference type="ChEBI" id="CHEBI:17368"/>
        <dbReference type="ChEBI" id="CHEBI:17596"/>
        <dbReference type="ChEBI" id="CHEBI:43474"/>
        <dbReference type="ChEBI" id="CHEBI:57720"/>
        <dbReference type="EC" id="2.4.2.1"/>
    </reaction>
</comment>
<comment type="catalytic activity">
    <reaction evidence="1">
        <text>thymidine + phosphate = 2-deoxy-alpha-D-ribose 1-phosphate + thymine</text>
        <dbReference type="Rhea" id="RHEA:16037"/>
        <dbReference type="ChEBI" id="CHEBI:17748"/>
        <dbReference type="ChEBI" id="CHEBI:17821"/>
        <dbReference type="ChEBI" id="CHEBI:43474"/>
        <dbReference type="ChEBI" id="CHEBI:57259"/>
        <dbReference type="EC" id="2.4.2.2"/>
    </reaction>
</comment>
<comment type="catalytic activity">
    <reaction evidence="1">
        <text>uridine + phosphate = alpha-D-ribose 1-phosphate + uracil</text>
        <dbReference type="Rhea" id="RHEA:24388"/>
        <dbReference type="ChEBI" id="CHEBI:16704"/>
        <dbReference type="ChEBI" id="CHEBI:17568"/>
        <dbReference type="ChEBI" id="CHEBI:43474"/>
        <dbReference type="ChEBI" id="CHEBI:57720"/>
        <dbReference type="EC" id="2.4.2.2"/>
    </reaction>
</comment>
<comment type="catalytic activity">
    <reaction evidence="1">
        <text>xanthosine + phosphate = alpha-D-ribose 1-phosphate + xanthine</text>
        <dbReference type="Rhea" id="RHEA:27638"/>
        <dbReference type="ChEBI" id="CHEBI:17712"/>
        <dbReference type="ChEBI" id="CHEBI:18107"/>
        <dbReference type="ChEBI" id="CHEBI:43474"/>
        <dbReference type="ChEBI" id="CHEBI:57720"/>
        <dbReference type="EC" id="2.4.2.1"/>
    </reaction>
</comment>
<comment type="similarity">
    <text evidence="1">Belongs to the nucleoside phosphorylase PpnP family.</text>
</comment>
<name>PPNP_VIBC1</name>
<accession>A7N609</accession>
<protein>
    <recommendedName>
        <fullName evidence="1">Pyrimidine/purine nucleoside phosphorylase</fullName>
        <ecNumber evidence="1">2.4.2.1</ecNumber>
        <ecNumber evidence="1">2.4.2.2</ecNumber>
    </recommendedName>
    <alternativeName>
        <fullName evidence="1">Adenosine phosphorylase</fullName>
    </alternativeName>
    <alternativeName>
        <fullName evidence="1">Cytidine phosphorylase</fullName>
    </alternativeName>
    <alternativeName>
        <fullName evidence="1">Guanosine phosphorylase</fullName>
    </alternativeName>
    <alternativeName>
        <fullName evidence="1">Inosine phosphorylase</fullName>
    </alternativeName>
    <alternativeName>
        <fullName evidence="1">Thymidine phosphorylase</fullName>
    </alternativeName>
    <alternativeName>
        <fullName evidence="1">Uridine phosphorylase</fullName>
    </alternativeName>
    <alternativeName>
        <fullName evidence="1">Xanthosine phosphorylase</fullName>
    </alternativeName>
</protein>
<dbReference type="EC" id="2.4.2.1" evidence="1"/>
<dbReference type="EC" id="2.4.2.2" evidence="1"/>
<dbReference type="EMBL" id="CP000790">
    <property type="protein sequence ID" value="ABU74826.1"/>
    <property type="molecule type" value="Genomic_DNA"/>
</dbReference>
<dbReference type="RefSeq" id="WP_012130286.1">
    <property type="nucleotide sequence ID" value="NC_022270.1"/>
</dbReference>
<dbReference type="SMR" id="A7N609"/>
<dbReference type="KEGG" id="vha:VIBHAR_06952"/>
<dbReference type="PATRIC" id="fig|338187.25.peg.3499"/>
<dbReference type="Proteomes" id="UP000008152">
    <property type="component" value="Chromosome II"/>
</dbReference>
<dbReference type="GO" id="GO:0005829">
    <property type="term" value="C:cytosol"/>
    <property type="evidence" value="ECO:0007669"/>
    <property type="project" value="TreeGrafter"/>
</dbReference>
<dbReference type="GO" id="GO:0047975">
    <property type="term" value="F:guanosine phosphorylase activity"/>
    <property type="evidence" value="ECO:0007669"/>
    <property type="project" value="UniProtKB-EC"/>
</dbReference>
<dbReference type="GO" id="GO:0004731">
    <property type="term" value="F:purine-nucleoside phosphorylase activity"/>
    <property type="evidence" value="ECO:0007669"/>
    <property type="project" value="UniProtKB-UniRule"/>
</dbReference>
<dbReference type="GO" id="GO:0009032">
    <property type="term" value="F:thymidine phosphorylase activity"/>
    <property type="evidence" value="ECO:0007669"/>
    <property type="project" value="UniProtKB-EC"/>
</dbReference>
<dbReference type="GO" id="GO:0004850">
    <property type="term" value="F:uridine phosphorylase activity"/>
    <property type="evidence" value="ECO:0007669"/>
    <property type="project" value="UniProtKB-EC"/>
</dbReference>
<dbReference type="CDD" id="cd20296">
    <property type="entry name" value="cupin_PpnP-like"/>
    <property type="match status" value="1"/>
</dbReference>
<dbReference type="FunFam" id="2.60.120.10:FF:000016">
    <property type="entry name" value="Pyrimidine/purine nucleoside phosphorylase"/>
    <property type="match status" value="1"/>
</dbReference>
<dbReference type="Gene3D" id="2.60.120.10">
    <property type="entry name" value="Jelly Rolls"/>
    <property type="match status" value="1"/>
</dbReference>
<dbReference type="HAMAP" id="MF_01537">
    <property type="entry name" value="Nucleos_phosphorylase_PpnP"/>
    <property type="match status" value="1"/>
</dbReference>
<dbReference type="InterPro" id="IPR009664">
    <property type="entry name" value="Ppnp"/>
</dbReference>
<dbReference type="InterPro" id="IPR014710">
    <property type="entry name" value="RmlC-like_jellyroll"/>
</dbReference>
<dbReference type="InterPro" id="IPR011051">
    <property type="entry name" value="RmlC_Cupin_sf"/>
</dbReference>
<dbReference type="PANTHER" id="PTHR36540">
    <property type="entry name" value="PYRIMIDINE/PURINE NUCLEOSIDE PHOSPHORYLASE"/>
    <property type="match status" value="1"/>
</dbReference>
<dbReference type="PANTHER" id="PTHR36540:SF1">
    <property type="entry name" value="PYRIMIDINE_PURINE NUCLEOSIDE PHOSPHORYLASE"/>
    <property type="match status" value="1"/>
</dbReference>
<dbReference type="Pfam" id="PF06865">
    <property type="entry name" value="Ppnp"/>
    <property type="match status" value="1"/>
</dbReference>
<dbReference type="SUPFAM" id="SSF51182">
    <property type="entry name" value="RmlC-like cupins"/>
    <property type="match status" value="1"/>
</dbReference>
<organism>
    <name type="scientific">Vibrio campbellii (strain ATCC BAA-1116)</name>
    <dbReference type="NCBI Taxonomy" id="2902295"/>
    <lineage>
        <taxon>Bacteria</taxon>
        <taxon>Pseudomonadati</taxon>
        <taxon>Pseudomonadota</taxon>
        <taxon>Gammaproteobacteria</taxon>
        <taxon>Vibrionales</taxon>
        <taxon>Vibrionaceae</taxon>
        <taxon>Vibrio</taxon>
    </lineage>
</organism>
<keyword id="KW-0328">Glycosyltransferase</keyword>
<keyword id="KW-0808">Transferase</keyword>
<sequence>MSIKENSYFAGGVKSLGFNQQGQDVSVGVMLPGEYTFGTQAPERMSVVKGALIVKKAGEVDWVTYNTGEFFEVEGSSSFELQVKDATAYLCEYL</sequence>
<reference key="1">
    <citation type="submission" date="2007-08" db="EMBL/GenBank/DDBJ databases">
        <authorList>
            <consortium name="The Vibrio harveyi Genome Sequencing Project"/>
            <person name="Bassler B."/>
            <person name="Clifton S.W."/>
            <person name="Fulton L."/>
            <person name="Delehaunty K."/>
            <person name="Fronick C."/>
            <person name="Harrison M."/>
            <person name="Markivic C."/>
            <person name="Fulton R."/>
            <person name="Tin-Wollam A.-M."/>
            <person name="Shah N."/>
            <person name="Pepin K."/>
            <person name="Nash W."/>
            <person name="Thiruvilangam P."/>
            <person name="Bhonagiri V."/>
            <person name="Waters C."/>
            <person name="Tu K.C."/>
            <person name="Irgon J."/>
            <person name="Wilson R.K."/>
        </authorList>
    </citation>
    <scope>NUCLEOTIDE SEQUENCE [LARGE SCALE GENOMIC DNA]</scope>
    <source>
        <strain>ATCC BAA-1116 / BB120</strain>
    </source>
</reference>
<feature type="chain" id="PRO_1000068741" description="Pyrimidine/purine nucleoside phosphorylase">
    <location>
        <begin position="1"/>
        <end position="94"/>
    </location>
</feature>
<gene>
    <name evidence="1" type="primary">ppnP</name>
    <name type="ordered locus">VIBHAR_06952</name>
</gene>
<proteinExistence type="inferred from homology"/>
<evidence type="ECO:0000255" key="1">
    <source>
        <dbReference type="HAMAP-Rule" id="MF_01537"/>
    </source>
</evidence>